<accession>B5Z9I6</accession>
<name>EFTS_HELPG</name>
<evidence type="ECO:0000255" key="1">
    <source>
        <dbReference type="HAMAP-Rule" id="MF_00050"/>
    </source>
</evidence>
<proteinExistence type="inferred from homology"/>
<sequence length="355" mass="39799">MSGISAQLVKKLRDLTDAGMMDCKKALVEVAGDLQKAIDFLREKGLSKAAKKADRIAAEGVVALEVAPDFKSAMMVEINSETDFVAKNEGFKELVKKTLETIKAHNIHTPEELLKSQLDNKPFEEYLHSQIAVIGENILVRKIAHLKALSSHIVNGYAHSNARVGVLIGIKYNNEKNAPKVVELARNIAMHAAAMKPQVLDCKDFSLDFVKKETLALIAEIEKDNEEAKRLGKPLKNIPTFGSRIELSDEVLAHQKKAFENELKEQGKPEKIWDKIVPGKMERFIADNTLIDQRLTLLGQFYVMDDKKTIAQVVADCSKEWDDDLKITEYVRFELGEGIEKKAENFAEEVALQMK</sequence>
<comment type="function">
    <text evidence="1">Associates with the EF-Tu.GDP complex and induces the exchange of GDP to GTP. It remains bound to the aminoacyl-tRNA.EF-Tu.GTP complex up to the GTP hydrolysis stage on the ribosome.</text>
</comment>
<comment type="subcellular location">
    <subcellularLocation>
        <location evidence="1">Cytoplasm</location>
    </subcellularLocation>
</comment>
<comment type="similarity">
    <text evidence="1">Belongs to the EF-Ts family.</text>
</comment>
<dbReference type="EMBL" id="CP001173">
    <property type="protein sequence ID" value="ACI28235.1"/>
    <property type="molecule type" value="Genomic_DNA"/>
</dbReference>
<dbReference type="RefSeq" id="WP_000014429.1">
    <property type="nucleotide sequence ID" value="NC_011333.1"/>
</dbReference>
<dbReference type="SMR" id="B5Z9I6"/>
<dbReference type="KEGG" id="hpg:HPG27_1493"/>
<dbReference type="HOGENOM" id="CLU_047155_0_1_7"/>
<dbReference type="Proteomes" id="UP000001735">
    <property type="component" value="Chromosome"/>
</dbReference>
<dbReference type="GO" id="GO:0005737">
    <property type="term" value="C:cytoplasm"/>
    <property type="evidence" value="ECO:0007669"/>
    <property type="project" value="UniProtKB-SubCell"/>
</dbReference>
<dbReference type="GO" id="GO:0003746">
    <property type="term" value="F:translation elongation factor activity"/>
    <property type="evidence" value="ECO:0007669"/>
    <property type="project" value="UniProtKB-UniRule"/>
</dbReference>
<dbReference type="CDD" id="cd14275">
    <property type="entry name" value="UBA_EF-Ts"/>
    <property type="match status" value="1"/>
</dbReference>
<dbReference type="FunFam" id="1.10.286.20:FF:000004">
    <property type="entry name" value="Elongation factor Ts"/>
    <property type="match status" value="1"/>
</dbReference>
<dbReference type="FunFam" id="1.10.8.10:FF:000001">
    <property type="entry name" value="Elongation factor Ts"/>
    <property type="match status" value="1"/>
</dbReference>
<dbReference type="FunFam" id="3.30.479.20:FF:000029">
    <property type="entry name" value="Elongation factor Ts"/>
    <property type="match status" value="1"/>
</dbReference>
<dbReference type="Gene3D" id="1.10.286.20">
    <property type="match status" value="2"/>
</dbReference>
<dbReference type="Gene3D" id="1.10.8.10">
    <property type="entry name" value="DNA helicase RuvA subunit, C-terminal domain"/>
    <property type="match status" value="1"/>
</dbReference>
<dbReference type="Gene3D" id="3.30.479.20">
    <property type="entry name" value="Elongation factor Ts, dimerisation domain"/>
    <property type="match status" value="3"/>
</dbReference>
<dbReference type="HAMAP" id="MF_00050">
    <property type="entry name" value="EF_Ts"/>
    <property type="match status" value="1"/>
</dbReference>
<dbReference type="InterPro" id="IPR036402">
    <property type="entry name" value="EF-Ts_dimer_sf"/>
</dbReference>
<dbReference type="InterPro" id="IPR001816">
    <property type="entry name" value="Transl_elong_EFTs/EF1B"/>
</dbReference>
<dbReference type="InterPro" id="IPR014039">
    <property type="entry name" value="Transl_elong_EFTs/EF1B_dimer"/>
</dbReference>
<dbReference type="InterPro" id="IPR018101">
    <property type="entry name" value="Transl_elong_Ts_CS"/>
</dbReference>
<dbReference type="InterPro" id="IPR009060">
    <property type="entry name" value="UBA-like_sf"/>
</dbReference>
<dbReference type="NCBIfam" id="TIGR00116">
    <property type="entry name" value="tsf"/>
    <property type="match status" value="1"/>
</dbReference>
<dbReference type="PANTHER" id="PTHR11741">
    <property type="entry name" value="ELONGATION FACTOR TS"/>
    <property type="match status" value="1"/>
</dbReference>
<dbReference type="PANTHER" id="PTHR11741:SF0">
    <property type="entry name" value="ELONGATION FACTOR TS, MITOCHONDRIAL"/>
    <property type="match status" value="1"/>
</dbReference>
<dbReference type="Pfam" id="PF00889">
    <property type="entry name" value="EF_TS"/>
    <property type="match status" value="1"/>
</dbReference>
<dbReference type="SUPFAM" id="SSF54713">
    <property type="entry name" value="Elongation factor Ts (EF-Ts), dimerisation domain"/>
    <property type="match status" value="2"/>
</dbReference>
<dbReference type="SUPFAM" id="SSF46934">
    <property type="entry name" value="UBA-like"/>
    <property type="match status" value="1"/>
</dbReference>
<dbReference type="PROSITE" id="PS01126">
    <property type="entry name" value="EF_TS_1"/>
    <property type="match status" value="1"/>
</dbReference>
<dbReference type="PROSITE" id="PS01127">
    <property type="entry name" value="EF_TS_2"/>
    <property type="match status" value="1"/>
</dbReference>
<protein>
    <recommendedName>
        <fullName evidence="1">Elongation factor Ts</fullName>
        <shortName evidence="1">EF-Ts</shortName>
    </recommendedName>
</protein>
<organism>
    <name type="scientific">Helicobacter pylori (strain G27)</name>
    <dbReference type="NCBI Taxonomy" id="563041"/>
    <lineage>
        <taxon>Bacteria</taxon>
        <taxon>Pseudomonadati</taxon>
        <taxon>Campylobacterota</taxon>
        <taxon>Epsilonproteobacteria</taxon>
        <taxon>Campylobacterales</taxon>
        <taxon>Helicobacteraceae</taxon>
        <taxon>Helicobacter</taxon>
    </lineage>
</organism>
<reference key="1">
    <citation type="journal article" date="2009" name="J. Bacteriol.">
        <title>The complete genome sequence of Helicobacter pylori strain G27.</title>
        <authorList>
            <person name="Baltrus D.A."/>
            <person name="Amieva M.R."/>
            <person name="Covacci A."/>
            <person name="Lowe T.M."/>
            <person name="Merrell D.S."/>
            <person name="Ottemann K.M."/>
            <person name="Stein M."/>
            <person name="Salama N.R."/>
            <person name="Guillemin K."/>
        </authorList>
    </citation>
    <scope>NUCLEOTIDE SEQUENCE [LARGE SCALE GENOMIC DNA]</scope>
    <source>
        <strain>G27</strain>
    </source>
</reference>
<feature type="chain" id="PRO_1000116745" description="Elongation factor Ts">
    <location>
        <begin position="1"/>
        <end position="355"/>
    </location>
</feature>
<feature type="region of interest" description="Involved in Mg(2+) ion dislocation from EF-Tu" evidence="1">
    <location>
        <begin position="82"/>
        <end position="85"/>
    </location>
</feature>
<keyword id="KW-0963">Cytoplasm</keyword>
<keyword id="KW-0251">Elongation factor</keyword>
<keyword id="KW-0648">Protein biosynthesis</keyword>
<keyword id="KW-1185">Reference proteome</keyword>
<gene>
    <name evidence="1" type="primary">tsf</name>
    <name type="ordered locus">HPG27_1493</name>
</gene>